<keyword id="KW-0150">Chloroplast</keyword>
<keyword id="KW-0472">Membrane</keyword>
<keyword id="KW-0597">Phosphoprotein</keyword>
<keyword id="KW-0602">Photosynthesis</keyword>
<keyword id="KW-0604">Photosystem II</keyword>
<keyword id="KW-0934">Plastid</keyword>
<keyword id="KW-0691">RNA editing</keyword>
<keyword id="KW-0793">Thylakoid</keyword>
<keyword id="KW-0812">Transmembrane</keyword>
<keyword id="KW-1133">Transmembrane helix</keyword>
<organism>
    <name type="scientific">Anthoceros angustus</name>
    <name type="common">Hornwort</name>
    <name type="synonym">Anthoceros formosae</name>
    <dbReference type="NCBI Taxonomy" id="48387"/>
    <lineage>
        <taxon>Eukaryota</taxon>
        <taxon>Viridiplantae</taxon>
        <taxon>Streptophyta</taxon>
        <taxon>Embryophyta</taxon>
        <taxon>Anthocerotophyta</taxon>
        <taxon>Anthocerotopsida</taxon>
        <taxon>Anthocerotidae</taxon>
        <taxon>Anthocerotales</taxon>
        <taxon>Anthocerotaceae</taxon>
        <taxon>Anthoceros</taxon>
    </lineage>
</organism>
<reference key="1">
    <citation type="journal article" date="2003" name="Nucleic Acids Res.">
        <title>The complete nucleotide sequence of the hornwort (Anthoceros formosae) chloroplast genome: insight into the earliest land plants.</title>
        <authorList>
            <person name="Kugita M."/>
            <person name="Kaneko A."/>
            <person name="Yamamoto Y."/>
            <person name="Takeya Y."/>
            <person name="Matsumoto T."/>
            <person name="Yoshinaga K."/>
        </authorList>
    </citation>
    <scope>NUCLEOTIDE SEQUENCE [LARGE SCALE GENOMIC DNA]</scope>
    <scope>RNA EDITING</scope>
</reference>
<reference key="2">
    <citation type="journal article" date="2003" name="Nucleic Acids Res.">
        <title>RNA editing in hornwort chloroplasts makes more than half the genes functional.</title>
        <authorList>
            <person name="Kugita M."/>
            <person name="Yamamoto Y."/>
            <person name="Fujikawa T."/>
            <person name="Matsumoto T."/>
            <person name="Yoshinaga K."/>
        </authorList>
    </citation>
    <scope>NUCLEOTIDE SEQUENCE [MRNA]</scope>
    <scope>RNA EDITING</scope>
    <source>
        <tissue>Thallus</tissue>
    </source>
</reference>
<feature type="initiator methionine" description="Removed" evidence="1">
    <location>
        <position position="1"/>
    </location>
</feature>
<feature type="chain" id="PRO_0000070497" description="Photosystem II reaction center protein H">
    <location>
        <begin position="2"/>
        <end position="74"/>
    </location>
</feature>
<feature type="transmembrane region" description="Helical" evidence="2">
    <location>
        <begin position="41"/>
        <end position="61"/>
    </location>
</feature>
<feature type="modified residue" description="Phosphothreonine" evidence="2">
    <location>
        <position position="3"/>
    </location>
</feature>
<protein>
    <recommendedName>
        <fullName evidence="2">Photosystem II reaction center protein H</fullName>
        <shortName evidence="2">PSII-H</shortName>
    </recommendedName>
    <alternativeName>
        <fullName evidence="2">Photosystem II 10 kDa phosphoprotein</fullName>
    </alternativeName>
</protein>
<comment type="function">
    <text evidence="2">One of the components of the core complex of photosystem II (PSII), required for its stability and/or assembly. PSII is a light-driven water:plastoquinone oxidoreductase that uses light energy to abstract electrons from H(2)O, generating O(2) and a proton gradient subsequently used for ATP formation. It consists of a core antenna complex that captures photons, and an electron transfer chain that converts photonic excitation into a charge separation.</text>
</comment>
<comment type="subunit">
    <text evidence="2">PSII is composed of 1 copy each of membrane proteins PsbA, PsbB, PsbC, PsbD, PsbE, PsbF, PsbH, PsbI, PsbJ, PsbK, PsbL, PsbM, PsbT, PsbX, PsbY, PsbZ, Psb30/Ycf12, at least 3 peripheral proteins of the oxygen-evolving complex and a large number of cofactors. It forms dimeric complexes.</text>
</comment>
<comment type="subcellular location">
    <subcellularLocation>
        <location evidence="2">Plastid</location>
        <location evidence="2">Chloroplast thylakoid membrane</location>
        <topology evidence="2">Single-pass membrane protein</topology>
    </subcellularLocation>
</comment>
<comment type="PTM">
    <text evidence="2">Phosphorylation is a light-dependent reaction catalyzed by a membrane-bound kinase; phosphorylation occurs on Thr residue(s) in the N-terminus of the protein.</text>
</comment>
<comment type="RNA editing">
    <location>
        <position position="23" evidence="3 4"/>
    </location>
    <location>
        <position position="53" evidence="3 4"/>
    </location>
    <location>
        <position position="54" evidence="3 4"/>
    </location>
    <location>
        <position position="60" evidence="3 4"/>
    </location>
</comment>
<comment type="similarity">
    <text evidence="2">Belongs to the PsbH family.</text>
</comment>
<gene>
    <name evidence="2" type="primary">psbH</name>
</gene>
<evidence type="ECO:0000250" key="1">
    <source>
        <dbReference type="UniProtKB" id="P56780"/>
    </source>
</evidence>
<evidence type="ECO:0000255" key="2">
    <source>
        <dbReference type="HAMAP-Rule" id="MF_00752"/>
    </source>
</evidence>
<evidence type="ECO:0000269" key="3">
    <source>
    </source>
</evidence>
<evidence type="ECO:0000269" key="4">
    <source>
    </source>
</evidence>
<accession>Q85CN0</accession>
<name>PSBH_ANTAG</name>
<sequence length="74" mass="7923">MATQIIDDTPKTKGRRSGIGNILKPLNSEYGKVAPGWGTTPLMGIAMGLFAVFLVIILELYNSSVLLDGVSVSW</sequence>
<proteinExistence type="evidence at transcript level"/>
<geneLocation type="chloroplast"/>
<dbReference type="EMBL" id="AB086179">
    <property type="protein sequence ID" value="BAC55378.1"/>
    <property type="molecule type" value="Genomic_DNA"/>
</dbReference>
<dbReference type="EMBL" id="AB087463">
    <property type="protein sequence ID" value="BAC55475.1"/>
    <property type="molecule type" value="mRNA"/>
</dbReference>
<dbReference type="RefSeq" id="NP_777442.1">
    <property type="nucleotide sequence ID" value="NC_004543.1"/>
</dbReference>
<dbReference type="SMR" id="Q85CN0"/>
<dbReference type="GeneID" id="2553402"/>
<dbReference type="GO" id="GO:0009535">
    <property type="term" value="C:chloroplast thylakoid membrane"/>
    <property type="evidence" value="ECO:0007669"/>
    <property type="project" value="UniProtKB-SubCell"/>
</dbReference>
<dbReference type="GO" id="GO:0009523">
    <property type="term" value="C:photosystem II"/>
    <property type="evidence" value="ECO:0007669"/>
    <property type="project" value="UniProtKB-KW"/>
</dbReference>
<dbReference type="GO" id="GO:0042301">
    <property type="term" value="F:phosphate ion binding"/>
    <property type="evidence" value="ECO:0007669"/>
    <property type="project" value="InterPro"/>
</dbReference>
<dbReference type="GO" id="GO:0015979">
    <property type="term" value="P:photosynthesis"/>
    <property type="evidence" value="ECO:0007669"/>
    <property type="project" value="UniProtKB-UniRule"/>
</dbReference>
<dbReference type="GO" id="GO:0050821">
    <property type="term" value="P:protein stabilization"/>
    <property type="evidence" value="ECO:0007669"/>
    <property type="project" value="InterPro"/>
</dbReference>
<dbReference type="Gene3D" id="1.20.5.880">
    <property type="entry name" value="Photosystem II reaction center protein H"/>
    <property type="match status" value="1"/>
</dbReference>
<dbReference type="HAMAP" id="MF_00752">
    <property type="entry name" value="PSII_PsbH"/>
    <property type="match status" value="1"/>
</dbReference>
<dbReference type="InterPro" id="IPR001056">
    <property type="entry name" value="PSII_PsbH"/>
</dbReference>
<dbReference type="InterPro" id="IPR036863">
    <property type="entry name" value="PSII_PsbH_sf"/>
</dbReference>
<dbReference type="NCBIfam" id="NF002728">
    <property type="entry name" value="PRK02624.1"/>
    <property type="match status" value="1"/>
</dbReference>
<dbReference type="PANTHER" id="PTHR34469">
    <property type="entry name" value="PHOTOSYSTEM II REACTION CENTER PROTEIN H"/>
    <property type="match status" value="1"/>
</dbReference>
<dbReference type="PANTHER" id="PTHR34469:SF4">
    <property type="entry name" value="PHOTOSYSTEM II REACTION CENTER PROTEIN H"/>
    <property type="match status" value="1"/>
</dbReference>
<dbReference type="Pfam" id="PF00737">
    <property type="entry name" value="PsbH"/>
    <property type="match status" value="1"/>
</dbReference>
<dbReference type="SUPFAM" id="SSF161025">
    <property type="entry name" value="Photosystem II 10 kDa phosphoprotein PsbH"/>
    <property type="match status" value="1"/>
</dbReference>